<accession>Q7RTV2</accession>
<accession>Q5SZC2</accession>
<reference key="1">
    <citation type="journal article" date="2003" name="Nature">
        <title>The DNA sequence and analysis of human chromosome 6.</title>
        <authorList>
            <person name="Mungall A.J."/>
            <person name="Palmer S.A."/>
            <person name="Sims S.K."/>
            <person name="Edwards C.A."/>
            <person name="Ashurst J.L."/>
            <person name="Wilming L."/>
            <person name="Jones M.C."/>
            <person name="Horton R."/>
            <person name="Hunt S.E."/>
            <person name="Scott C.E."/>
            <person name="Gilbert J.G.R."/>
            <person name="Clamp M.E."/>
            <person name="Bethel G."/>
            <person name="Milne S."/>
            <person name="Ainscough R."/>
            <person name="Almeida J.P."/>
            <person name="Ambrose K.D."/>
            <person name="Andrews T.D."/>
            <person name="Ashwell R.I.S."/>
            <person name="Babbage A.K."/>
            <person name="Bagguley C.L."/>
            <person name="Bailey J."/>
            <person name="Banerjee R."/>
            <person name="Barker D.J."/>
            <person name="Barlow K.F."/>
            <person name="Bates K."/>
            <person name="Beare D.M."/>
            <person name="Beasley H."/>
            <person name="Beasley O."/>
            <person name="Bird C.P."/>
            <person name="Blakey S.E."/>
            <person name="Bray-Allen S."/>
            <person name="Brook J."/>
            <person name="Brown A.J."/>
            <person name="Brown J.Y."/>
            <person name="Burford D.C."/>
            <person name="Burrill W."/>
            <person name="Burton J."/>
            <person name="Carder C."/>
            <person name="Carter N.P."/>
            <person name="Chapman J.C."/>
            <person name="Clark S.Y."/>
            <person name="Clark G."/>
            <person name="Clee C.M."/>
            <person name="Clegg S."/>
            <person name="Cobley V."/>
            <person name="Collier R.E."/>
            <person name="Collins J.E."/>
            <person name="Colman L.K."/>
            <person name="Corby N.R."/>
            <person name="Coville G.J."/>
            <person name="Culley K.M."/>
            <person name="Dhami P."/>
            <person name="Davies J."/>
            <person name="Dunn M."/>
            <person name="Earthrowl M.E."/>
            <person name="Ellington A.E."/>
            <person name="Evans K.A."/>
            <person name="Faulkner L."/>
            <person name="Francis M.D."/>
            <person name="Frankish A."/>
            <person name="Frankland J."/>
            <person name="French L."/>
            <person name="Garner P."/>
            <person name="Garnett J."/>
            <person name="Ghori M.J."/>
            <person name="Gilby L.M."/>
            <person name="Gillson C.J."/>
            <person name="Glithero R.J."/>
            <person name="Grafham D.V."/>
            <person name="Grant M."/>
            <person name="Gribble S."/>
            <person name="Griffiths C."/>
            <person name="Griffiths M.N.D."/>
            <person name="Hall R."/>
            <person name="Halls K.S."/>
            <person name="Hammond S."/>
            <person name="Harley J.L."/>
            <person name="Hart E.A."/>
            <person name="Heath P.D."/>
            <person name="Heathcott R."/>
            <person name="Holmes S.J."/>
            <person name="Howden P.J."/>
            <person name="Howe K.L."/>
            <person name="Howell G.R."/>
            <person name="Huckle E."/>
            <person name="Humphray S.J."/>
            <person name="Humphries M.D."/>
            <person name="Hunt A.R."/>
            <person name="Johnson C.M."/>
            <person name="Joy A.A."/>
            <person name="Kay M."/>
            <person name="Keenan S.J."/>
            <person name="Kimberley A.M."/>
            <person name="King A."/>
            <person name="Laird G.K."/>
            <person name="Langford C."/>
            <person name="Lawlor S."/>
            <person name="Leongamornlert D.A."/>
            <person name="Leversha M."/>
            <person name="Lloyd C.R."/>
            <person name="Lloyd D.M."/>
            <person name="Loveland J.E."/>
            <person name="Lovell J."/>
            <person name="Martin S."/>
            <person name="Mashreghi-Mohammadi M."/>
            <person name="Maslen G.L."/>
            <person name="Matthews L."/>
            <person name="McCann O.T."/>
            <person name="McLaren S.J."/>
            <person name="McLay K."/>
            <person name="McMurray A."/>
            <person name="Moore M.J.F."/>
            <person name="Mullikin J.C."/>
            <person name="Niblett D."/>
            <person name="Nickerson T."/>
            <person name="Novik K.L."/>
            <person name="Oliver K."/>
            <person name="Overton-Larty E.K."/>
            <person name="Parker A."/>
            <person name="Patel R."/>
            <person name="Pearce A.V."/>
            <person name="Peck A.I."/>
            <person name="Phillimore B.J.C.T."/>
            <person name="Phillips S."/>
            <person name="Plumb R.W."/>
            <person name="Porter K.M."/>
            <person name="Ramsey Y."/>
            <person name="Ranby S.A."/>
            <person name="Rice C.M."/>
            <person name="Ross M.T."/>
            <person name="Searle S.M."/>
            <person name="Sehra H.K."/>
            <person name="Sheridan E."/>
            <person name="Skuce C.D."/>
            <person name="Smith S."/>
            <person name="Smith M."/>
            <person name="Spraggon L."/>
            <person name="Squares S.L."/>
            <person name="Steward C.A."/>
            <person name="Sycamore N."/>
            <person name="Tamlyn-Hall G."/>
            <person name="Tester J."/>
            <person name="Theaker A.J."/>
            <person name="Thomas D.W."/>
            <person name="Thorpe A."/>
            <person name="Tracey A."/>
            <person name="Tromans A."/>
            <person name="Tubby B."/>
            <person name="Wall M."/>
            <person name="Wallis J.M."/>
            <person name="West A.P."/>
            <person name="White S.S."/>
            <person name="Whitehead S.L."/>
            <person name="Whittaker H."/>
            <person name="Wild A."/>
            <person name="Willey D.J."/>
            <person name="Wilmer T.E."/>
            <person name="Wood J.M."/>
            <person name="Wray P.W."/>
            <person name="Wyatt J.C."/>
            <person name="Young L."/>
            <person name="Younger R.M."/>
            <person name="Bentley D.R."/>
            <person name="Coulson A."/>
            <person name="Durbin R.M."/>
            <person name="Hubbard T."/>
            <person name="Sulston J.E."/>
            <person name="Dunham I."/>
            <person name="Rogers J."/>
            <person name="Beck S."/>
        </authorList>
    </citation>
    <scope>NUCLEOTIDE SEQUENCE [LARGE SCALE GENOMIC DNA]</scope>
</reference>
<reference key="2">
    <citation type="journal article" date="2002" name="Pharmacogenetics">
        <title>The human glutathione transferase alpha locus: genomic organization of the gene cluster and functional characterization of the genetic polymorphism in the hGSTA1 promoter.</title>
        <authorList>
            <person name="Morel F."/>
            <person name="Rauch C."/>
            <person name="Coles B."/>
            <person name="Ferrec E.L."/>
            <person name="Guillouzo A."/>
        </authorList>
    </citation>
    <scope>IDENTIFICATION</scope>
</reference>
<reference key="3">
    <citation type="journal article" date="2010" name="Biochim. Biophys. Acta">
        <title>The human hGSTA5 gene encodes an enzymatically active protein.</title>
        <authorList>
            <person name="Singh S.P."/>
            <person name="Zimniak L."/>
            <person name="Zimniak P."/>
        </authorList>
    </citation>
    <scope>CATALYTIC ACTIVITY</scope>
</reference>
<proteinExistence type="evidence at protein level"/>
<evidence type="ECO:0000250" key="1"/>
<evidence type="ECO:0000250" key="2">
    <source>
        <dbReference type="UniProtKB" id="P08263"/>
    </source>
</evidence>
<evidence type="ECO:0000250" key="3">
    <source>
        <dbReference type="UniProtKB" id="P13745"/>
    </source>
</evidence>
<evidence type="ECO:0000250" key="4">
    <source>
        <dbReference type="UniProtKB" id="P30115"/>
    </source>
</evidence>
<evidence type="ECO:0000250" key="5">
    <source>
        <dbReference type="UniProtKB" id="P30711"/>
    </source>
</evidence>
<evidence type="ECO:0000269" key="6">
    <source>
    </source>
</evidence>
<evidence type="ECO:0000305" key="7"/>
<sequence>MAEKPKLHYSNARGSMESIRWLLAAAGVELEEKFLESAEDLDKLRNDGSLLFQQVPMVEIDGMKLVQTRAILNYIASKYNLYGKDMKERALIDMYTEGIVDLTEMILLLLICQPEERDAKTALVKEKIKNRYFPAFEKVLKSHRQDYLVGNKLSWADIHLVELFYYVEELDSSLISSFPLLKALKTRISNLPTVKKFLQPGSQRKPPMDEKSLEEARKIFRF</sequence>
<name>GSTA5_HUMAN</name>
<organism>
    <name type="scientific">Homo sapiens</name>
    <name type="common">Human</name>
    <dbReference type="NCBI Taxonomy" id="9606"/>
    <lineage>
        <taxon>Eukaryota</taxon>
        <taxon>Metazoa</taxon>
        <taxon>Chordata</taxon>
        <taxon>Craniata</taxon>
        <taxon>Vertebrata</taxon>
        <taxon>Euteleostomi</taxon>
        <taxon>Mammalia</taxon>
        <taxon>Eutheria</taxon>
        <taxon>Euarchontoglires</taxon>
        <taxon>Primates</taxon>
        <taxon>Haplorrhini</taxon>
        <taxon>Catarrhini</taxon>
        <taxon>Hominidae</taxon>
        <taxon>Homo</taxon>
    </lineage>
</organism>
<keyword id="KW-0007">Acetylation</keyword>
<keyword id="KW-0963">Cytoplasm</keyword>
<keyword id="KW-1267">Proteomics identification</keyword>
<keyword id="KW-1185">Reference proteome</keyword>
<keyword id="KW-0808">Transferase</keyword>
<dbReference type="EC" id="2.5.1.18"/>
<dbReference type="EMBL" id="AL590363">
    <property type="status" value="NOT_ANNOTATED_CDS"/>
    <property type="molecule type" value="Genomic_DNA"/>
</dbReference>
<dbReference type="EMBL" id="BK000212">
    <property type="protein sequence ID" value="DAA00071.1"/>
    <property type="molecule type" value="Genomic_DNA"/>
</dbReference>
<dbReference type="CCDS" id="CCDS4946.1"/>
<dbReference type="RefSeq" id="NP_714543.1">
    <property type="nucleotide sequence ID" value="NM_153699.3"/>
</dbReference>
<dbReference type="RefSeq" id="XP_054184397.1">
    <property type="nucleotide sequence ID" value="XM_054328422.1"/>
</dbReference>
<dbReference type="SMR" id="Q7RTV2"/>
<dbReference type="BioGRID" id="128713">
    <property type="interactions" value="8"/>
</dbReference>
<dbReference type="FunCoup" id="Q7RTV2">
    <property type="interactions" value="160"/>
</dbReference>
<dbReference type="IntAct" id="Q7RTV2">
    <property type="interactions" value="8"/>
</dbReference>
<dbReference type="STRING" id="9606.ENSP00000360028"/>
<dbReference type="DrugBank" id="DB00143">
    <property type="generic name" value="Glutathione"/>
</dbReference>
<dbReference type="iPTMnet" id="Q7RTV2"/>
<dbReference type="PhosphoSitePlus" id="Q7RTV2"/>
<dbReference type="BioMuta" id="GSTA5"/>
<dbReference type="DMDM" id="50400409"/>
<dbReference type="jPOST" id="Q7RTV2"/>
<dbReference type="MassIVE" id="Q7RTV2"/>
<dbReference type="PaxDb" id="9606-ENSP00000360028"/>
<dbReference type="PeptideAtlas" id="Q7RTV2"/>
<dbReference type="ProteomicsDB" id="68912"/>
<dbReference type="Antibodypedia" id="30946">
    <property type="antibodies" value="66 antibodies from 17 providers"/>
</dbReference>
<dbReference type="DNASU" id="221357"/>
<dbReference type="Ensembl" id="ENST00000370989.7">
    <property type="protein sequence ID" value="ENSP00000360028.1"/>
    <property type="gene ID" value="ENSG00000182793.12"/>
</dbReference>
<dbReference type="GeneID" id="221357"/>
<dbReference type="KEGG" id="hsa:221357"/>
<dbReference type="MANE-Select" id="ENST00000370989.7">
    <property type="protein sequence ID" value="ENSP00000360028.1"/>
    <property type="RefSeq nucleotide sequence ID" value="NM_153699.3"/>
    <property type="RefSeq protein sequence ID" value="NP_714543.1"/>
</dbReference>
<dbReference type="UCSC" id="uc003pba.2">
    <property type="organism name" value="human"/>
</dbReference>
<dbReference type="AGR" id="HGNC:19662"/>
<dbReference type="CTD" id="221357"/>
<dbReference type="DisGeNET" id="221357"/>
<dbReference type="GeneCards" id="GSTA5"/>
<dbReference type="HGNC" id="HGNC:19662">
    <property type="gene designation" value="GSTA5"/>
</dbReference>
<dbReference type="HPA" id="ENSG00000182793">
    <property type="expression patterns" value="Not detected"/>
</dbReference>
<dbReference type="MIM" id="607605">
    <property type="type" value="gene"/>
</dbReference>
<dbReference type="neXtProt" id="NX_Q7RTV2"/>
<dbReference type="OpenTargets" id="ENSG00000182793"/>
<dbReference type="PharmGKB" id="PA134962856"/>
<dbReference type="VEuPathDB" id="HostDB:ENSG00000182793"/>
<dbReference type="eggNOG" id="KOG1695">
    <property type="taxonomic scope" value="Eukaryota"/>
</dbReference>
<dbReference type="GeneTree" id="ENSGT00940000163367"/>
<dbReference type="HOGENOM" id="CLU_039475_4_0_1"/>
<dbReference type="InParanoid" id="Q7RTV2"/>
<dbReference type="OMA" id="LVELFYY"/>
<dbReference type="OrthoDB" id="414243at2759"/>
<dbReference type="PAN-GO" id="Q7RTV2">
    <property type="GO annotations" value="4 GO annotations based on evolutionary models"/>
</dbReference>
<dbReference type="PhylomeDB" id="Q7RTV2"/>
<dbReference type="TreeFam" id="TF105321"/>
<dbReference type="BRENDA" id="2.5.1.18">
    <property type="organism ID" value="2681"/>
</dbReference>
<dbReference type="PathwayCommons" id="Q7RTV2"/>
<dbReference type="Reactome" id="R-HSA-156590">
    <property type="pathway name" value="Glutathione conjugation"/>
</dbReference>
<dbReference type="SignaLink" id="Q7RTV2"/>
<dbReference type="BioGRID-ORCS" id="221357">
    <property type="hits" value="53 hits in 1116 CRISPR screens"/>
</dbReference>
<dbReference type="CD-CODE" id="91857CE7">
    <property type="entry name" value="Nucleolus"/>
</dbReference>
<dbReference type="GenomeRNAi" id="221357"/>
<dbReference type="Pharos" id="Q7RTV2">
    <property type="development level" value="Tbio"/>
</dbReference>
<dbReference type="PRO" id="PR:Q7RTV2"/>
<dbReference type="Proteomes" id="UP000005640">
    <property type="component" value="Chromosome 6"/>
</dbReference>
<dbReference type="RNAct" id="Q7RTV2">
    <property type="molecule type" value="protein"/>
</dbReference>
<dbReference type="Bgee" id="ENSG00000182793">
    <property type="expression patterns" value="Expressed in male germ line stem cell (sensu Vertebrata) in testis and 13 other cell types or tissues"/>
</dbReference>
<dbReference type="GO" id="GO:0005829">
    <property type="term" value="C:cytosol"/>
    <property type="evidence" value="ECO:0000314"/>
    <property type="project" value="HPA"/>
</dbReference>
<dbReference type="GO" id="GO:0070062">
    <property type="term" value="C:extracellular exosome"/>
    <property type="evidence" value="ECO:0007005"/>
    <property type="project" value="UniProtKB"/>
</dbReference>
<dbReference type="GO" id="GO:0004364">
    <property type="term" value="F:glutathione transferase activity"/>
    <property type="evidence" value="ECO:0000250"/>
    <property type="project" value="UniProtKB"/>
</dbReference>
<dbReference type="GO" id="GO:0006749">
    <property type="term" value="P:glutathione metabolic process"/>
    <property type="evidence" value="ECO:0000250"/>
    <property type="project" value="UniProtKB"/>
</dbReference>
<dbReference type="GO" id="GO:0006805">
    <property type="term" value="P:xenobiotic metabolic process"/>
    <property type="evidence" value="ECO:0000318"/>
    <property type="project" value="GO_Central"/>
</dbReference>
<dbReference type="CDD" id="cd03208">
    <property type="entry name" value="GST_C_Alpha"/>
    <property type="match status" value="1"/>
</dbReference>
<dbReference type="CDD" id="cd03077">
    <property type="entry name" value="GST_N_Alpha"/>
    <property type="match status" value="1"/>
</dbReference>
<dbReference type="FunFam" id="1.20.1050.10:FF:000005">
    <property type="entry name" value="Glutathione S-transferase A1"/>
    <property type="match status" value="1"/>
</dbReference>
<dbReference type="Gene3D" id="1.20.1050.10">
    <property type="match status" value="1"/>
</dbReference>
<dbReference type="Gene3D" id="3.40.30.10">
    <property type="entry name" value="Glutaredoxin"/>
    <property type="match status" value="1"/>
</dbReference>
<dbReference type="InterPro" id="IPR010987">
    <property type="entry name" value="Glutathione-S-Trfase_C-like"/>
</dbReference>
<dbReference type="InterPro" id="IPR036282">
    <property type="entry name" value="Glutathione-S-Trfase_C_sf"/>
</dbReference>
<dbReference type="InterPro" id="IPR004045">
    <property type="entry name" value="Glutathione_S-Trfase_N"/>
</dbReference>
<dbReference type="InterPro" id="IPR003080">
    <property type="entry name" value="GST_alpha"/>
</dbReference>
<dbReference type="InterPro" id="IPR004046">
    <property type="entry name" value="GST_C"/>
</dbReference>
<dbReference type="InterPro" id="IPR050213">
    <property type="entry name" value="GST_superfamily"/>
</dbReference>
<dbReference type="InterPro" id="IPR036249">
    <property type="entry name" value="Thioredoxin-like_sf"/>
</dbReference>
<dbReference type="PANTHER" id="PTHR11571">
    <property type="entry name" value="GLUTATHIONE S-TRANSFERASE"/>
    <property type="match status" value="1"/>
</dbReference>
<dbReference type="PANTHER" id="PTHR11571:SF245">
    <property type="entry name" value="GLUTATHIONE S-TRANSFERASE A5"/>
    <property type="match status" value="1"/>
</dbReference>
<dbReference type="Pfam" id="PF00043">
    <property type="entry name" value="GST_C"/>
    <property type="match status" value="1"/>
</dbReference>
<dbReference type="Pfam" id="PF02798">
    <property type="entry name" value="GST_N"/>
    <property type="match status" value="1"/>
</dbReference>
<dbReference type="PRINTS" id="PR01266">
    <property type="entry name" value="GSTRNSFRASEA"/>
</dbReference>
<dbReference type="SFLD" id="SFLDG01205">
    <property type="entry name" value="AMPS.1"/>
    <property type="match status" value="1"/>
</dbReference>
<dbReference type="SFLD" id="SFLDG00363">
    <property type="entry name" value="AMPS_(cytGST):_Alpha-__Mu-__Pi"/>
    <property type="match status" value="1"/>
</dbReference>
<dbReference type="SUPFAM" id="SSF47616">
    <property type="entry name" value="GST C-terminal domain-like"/>
    <property type="match status" value="1"/>
</dbReference>
<dbReference type="SUPFAM" id="SSF52833">
    <property type="entry name" value="Thioredoxin-like"/>
    <property type="match status" value="1"/>
</dbReference>
<dbReference type="PROSITE" id="PS50405">
    <property type="entry name" value="GST_CTER"/>
    <property type="match status" value="1"/>
</dbReference>
<dbReference type="PROSITE" id="PS50404">
    <property type="entry name" value="GST_NTER"/>
    <property type="match status" value="1"/>
</dbReference>
<feature type="initiator methionine" description="Removed" evidence="4">
    <location>
        <position position="1"/>
    </location>
</feature>
<feature type="chain" id="PRO_0000185787" description="Glutathione S-transferase A5">
    <location>
        <begin position="2"/>
        <end position="222"/>
    </location>
</feature>
<feature type="domain" description="GST N-terminal">
    <location>
        <begin position="3"/>
        <end position="83"/>
    </location>
</feature>
<feature type="domain" description="GST C-terminal">
    <location>
        <begin position="85"/>
        <end position="208"/>
    </location>
</feature>
<feature type="binding site" evidence="3">
    <location>
        <position position="9"/>
    </location>
    <ligand>
        <name>glutathione</name>
        <dbReference type="ChEBI" id="CHEBI:57925"/>
    </ligand>
</feature>
<feature type="binding site" evidence="2">
    <location>
        <position position="45"/>
    </location>
    <ligand>
        <name>glutathione</name>
        <dbReference type="ChEBI" id="CHEBI:57925"/>
    </ligand>
</feature>
<feature type="binding site" evidence="5">
    <location>
        <begin position="54"/>
        <end position="55"/>
    </location>
    <ligand>
        <name>glutathione</name>
        <dbReference type="ChEBI" id="CHEBI:57925"/>
    </ligand>
</feature>
<feature type="binding site" evidence="3">
    <location>
        <begin position="67"/>
        <end position="68"/>
    </location>
    <ligand>
        <name>glutathione</name>
        <dbReference type="ChEBI" id="CHEBI:57925"/>
    </ligand>
</feature>
<feature type="modified residue" description="N-acetylalanine" evidence="4">
    <location>
        <position position="2"/>
    </location>
</feature>
<feature type="modified residue" description="N6-succinyllysine" evidence="4">
    <location>
        <position position="4"/>
    </location>
</feature>
<feature type="sequence variant" id="VAR_024483" description="In dbSNP:rs2397118.">
    <original>V</original>
    <variation>I</variation>
    <location>
        <position position="55"/>
    </location>
</feature>
<comment type="catalytic activity">
    <reaction evidence="6">
        <text>RX + glutathione = an S-substituted glutathione + a halide anion + H(+)</text>
        <dbReference type="Rhea" id="RHEA:16437"/>
        <dbReference type="ChEBI" id="CHEBI:15378"/>
        <dbReference type="ChEBI" id="CHEBI:16042"/>
        <dbReference type="ChEBI" id="CHEBI:17792"/>
        <dbReference type="ChEBI" id="CHEBI:57925"/>
        <dbReference type="ChEBI" id="CHEBI:90779"/>
        <dbReference type="EC" id="2.5.1.18"/>
    </reaction>
</comment>
<comment type="subunit">
    <text evidence="1">Homodimer.</text>
</comment>
<comment type="interaction">
    <interactant intactId="EBI-13328621">
        <id>Q7RTV2</id>
    </interactant>
    <interactant intactId="EBI-353901">
        <id>Q7L2H7</id>
        <label>EIF3M</label>
    </interactant>
    <organismsDiffer>false</organismsDiffer>
    <experiments>2</experiments>
</comment>
<comment type="interaction">
    <interactant intactId="EBI-13328621">
        <id>Q7RTV2</id>
    </interactant>
    <interactant intactId="EBI-10196201">
        <id>P09210</id>
        <label>GSTA2</label>
    </interactant>
    <organismsDiffer>false</organismsDiffer>
    <experiments>5</experiments>
</comment>
<comment type="interaction">
    <interactant intactId="EBI-13328621">
        <id>Q7RTV2</id>
    </interactant>
    <interactant intactId="EBI-746341">
        <id>Q8N6V9</id>
        <label>TEX9</label>
    </interactant>
    <organismsDiffer>false</organismsDiffer>
    <experiments>3</experiments>
</comment>
<comment type="subcellular location">
    <subcellularLocation>
        <location evidence="1">Cytoplasm</location>
    </subcellularLocation>
</comment>
<comment type="tissue specificity">
    <text>Expression not detected.</text>
</comment>
<comment type="similarity">
    <text evidence="7">Belongs to the GST superfamily. Alpha family.</text>
</comment>
<protein>
    <recommendedName>
        <fullName>Glutathione S-transferase A5</fullName>
        <ecNumber>2.5.1.18</ecNumber>
    </recommendedName>
    <alternativeName>
        <fullName>GST class-alpha member 5</fullName>
    </alternativeName>
    <alternativeName>
        <fullName>Glutathione S-transferase A5-5</fullName>
    </alternativeName>
</protein>
<gene>
    <name type="primary">GSTA5</name>
</gene>